<protein>
    <recommendedName>
        <fullName>DNA polymerase III subunit alpha</fullName>
        <ecNumber>2.7.7.7</ecNumber>
    </recommendedName>
</protein>
<evidence type="ECO:0000250" key="1"/>
<evidence type="ECO:0000305" key="2"/>
<accession>Q8K9S3</accession>
<organism>
    <name type="scientific">Buchnera aphidicola subsp. Schizaphis graminum (strain Sg)</name>
    <dbReference type="NCBI Taxonomy" id="198804"/>
    <lineage>
        <taxon>Bacteria</taxon>
        <taxon>Pseudomonadati</taxon>
        <taxon>Pseudomonadota</taxon>
        <taxon>Gammaproteobacteria</taxon>
        <taxon>Enterobacterales</taxon>
        <taxon>Erwiniaceae</taxon>
        <taxon>Buchnera</taxon>
    </lineage>
</organism>
<keyword id="KW-0963">Cytoplasm</keyword>
<keyword id="KW-0235">DNA replication</keyword>
<keyword id="KW-0239">DNA-directed DNA polymerase</keyword>
<keyword id="KW-0548">Nucleotidyltransferase</keyword>
<keyword id="KW-0808">Transferase</keyword>
<name>DPO3A_BUCAP</name>
<feature type="chain" id="PRO_0000103313" description="DNA polymerase III subunit alpha">
    <location>
        <begin position="1"/>
        <end position="1161"/>
    </location>
</feature>
<comment type="function">
    <text evidence="1">DNA polymerase III is a complex, multichain enzyme responsible for most of the replicative synthesis in bacteria. This DNA polymerase also exhibits 3' to 5' exonuclease activity. The alpha chain is the DNA polymerase (By similarity).</text>
</comment>
<comment type="catalytic activity">
    <reaction>
        <text>DNA(n) + a 2'-deoxyribonucleoside 5'-triphosphate = DNA(n+1) + diphosphate</text>
        <dbReference type="Rhea" id="RHEA:22508"/>
        <dbReference type="Rhea" id="RHEA-COMP:17339"/>
        <dbReference type="Rhea" id="RHEA-COMP:17340"/>
        <dbReference type="ChEBI" id="CHEBI:33019"/>
        <dbReference type="ChEBI" id="CHEBI:61560"/>
        <dbReference type="ChEBI" id="CHEBI:173112"/>
        <dbReference type="EC" id="2.7.7.7"/>
    </reaction>
</comment>
<comment type="subunit">
    <text evidence="1">DNA polymerase III contains a core (composed of alpha, epsilon and theta chains) that associates with a tau subunit. This core dimerizes to form the PolIII' complex. PolIII' associates with the gamma complex (composed of gamma, delta, delta', psi and chi chains) and with the beta chain to form the complete DNA polymerase III complex (By similarity).</text>
</comment>
<comment type="subcellular location">
    <subcellularLocation>
        <location evidence="1">Cytoplasm</location>
    </subcellularLocation>
</comment>
<comment type="similarity">
    <text evidence="2">Belongs to the DNA polymerase type-C family. DnaE subfamily.</text>
</comment>
<gene>
    <name type="primary">dnaE</name>
    <name type="ordered locus">BUsg_233</name>
</gene>
<sequence>MNLEEFVHLHVHSDYSIVDGLSKPEDLIKKSVNLGMKALSITDFNNLYGAIKFYNAAHKWGLKPIIGVTVKFFSELIKNELTELTLLATNQDGYKNLILLISRAYKKGYFCEKYVTIEKKWLSELNNGLILLSGGCQGEIGKTLLRGQTSLISDCLHFYEKYFSGFYYLELIRTYRENEEKYLSLAVDLSYSQNIPVVATNDVCFLNKEDFKIHKIRIAINEGVRLKESKIQNNYSKHQFLKTEKEMCFLFSDIPEAIINSVEISKRCNVFIKSGQYFLPQFNTRKISIENYLIQKSNKGLKKRLESNFKKVDKEIFLKYKNRLDTELGIINKMGFPSYFLIVMEFIQWAKDNNIPVGPGRGSGAGSLVAYVLNITEVDPLFFDLLFERFLNPERISLPDFDIDFCMEKRDRVIEHVVHTYGRESVAQIITFGTMTAKAVIRDVGRVLGYPYGFINNLSKLVPLDPGITLKDAFSKNSELYTLYKSDEDIQNLIDVSKKLEGVNRNVGKHAGGVVISPSKITDFCPVYCDEKGNNPVTQFDKNDIEYVGLLKFDFLGLRTLTIINCAVNMINKNLLLSNKKTININSIPLNESKCFLLLKKCETTGIFQLESYGMKDLVKRLQPDCFEDIIALIALFRPGPLQSGMVDNFINRKHGYEEISYPDHKWQHILLKPVLESTYGIILYQEQVMQIAQILAGYTLGKADILRRAMSKKNIKDMAEQRSIFIEGAQKNGINRKLAIKIFDLLEKFAGYGFNKSHSVAYALVSYQTLWLKAHYPSEFMASAMTSDIDNTDKIVMLVNESIQMGIKIIPPNINLSKYEFYVDHTKNIVYGLGAVKGIGRNPILNLVQEREKNGLFSDLFDLCMRTDPNKITRKVLEKLIMSGSCDCFNKNRNYLLSLIEDAIKASKEHFKIKKFQQESLFGSFKEELNILKKNNNLLNSFSDEEKKLENEHKVLGLYLTGHPIDRYAEELKYYLNNSTFSKLKLFNHTKKKIMVAGIVVSIKTKVTKNKNRIVILILDDSTGLLEVVIFKRLLNISEKLIQLNKILIVSGFLNTNFISKNLKMTAYDIMNLNLAREKYLDKLTIVLTEKQRDKCFLKKIYQFFQNQTTGIVPVYIFCKKKDLDSEYKLIKKWLITISNKLLVELDIFSKENKMQIKYF</sequence>
<proteinExistence type="inferred from homology"/>
<reference key="1">
    <citation type="journal article" date="2002" name="Science">
        <title>50 million years of genomic stasis in endosymbiotic bacteria.</title>
        <authorList>
            <person name="Tamas I."/>
            <person name="Klasson L."/>
            <person name="Canbaeck B."/>
            <person name="Naeslund A.K."/>
            <person name="Eriksson A.-S."/>
            <person name="Wernegreen J.J."/>
            <person name="Sandstroem J.P."/>
            <person name="Moran N.A."/>
            <person name="Andersson S.G.E."/>
        </authorList>
    </citation>
    <scope>NUCLEOTIDE SEQUENCE [LARGE SCALE GENOMIC DNA]</scope>
    <source>
        <strain>Sg</strain>
    </source>
</reference>
<dbReference type="EC" id="2.7.7.7"/>
<dbReference type="EMBL" id="AE013218">
    <property type="protein sequence ID" value="AAM67792.1"/>
    <property type="molecule type" value="Genomic_DNA"/>
</dbReference>
<dbReference type="RefSeq" id="WP_011053759.1">
    <property type="nucleotide sequence ID" value="NC_004061.1"/>
</dbReference>
<dbReference type="SMR" id="Q8K9S3"/>
<dbReference type="STRING" id="198804.BUsg_233"/>
<dbReference type="GeneID" id="93003699"/>
<dbReference type="KEGG" id="bas:BUsg_233"/>
<dbReference type="eggNOG" id="COG0587">
    <property type="taxonomic scope" value="Bacteria"/>
</dbReference>
<dbReference type="HOGENOM" id="CLU_001600_0_0_6"/>
<dbReference type="Proteomes" id="UP000000416">
    <property type="component" value="Chromosome"/>
</dbReference>
<dbReference type="GO" id="GO:0005737">
    <property type="term" value="C:cytoplasm"/>
    <property type="evidence" value="ECO:0007669"/>
    <property type="project" value="UniProtKB-SubCell"/>
</dbReference>
<dbReference type="GO" id="GO:0008408">
    <property type="term" value="F:3'-5' exonuclease activity"/>
    <property type="evidence" value="ECO:0007669"/>
    <property type="project" value="InterPro"/>
</dbReference>
<dbReference type="GO" id="GO:0003887">
    <property type="term" value="F:DNA-directed DNA polymerase activity"/>
    <property type="evidence" value="ECO:0007669"/>
    <property type="project" value="UniProtKB-KW"/>
</dbReference>
<dbReference type="GO" id="GO:0003676">
    <property type="term" value="F:nucleic acid binding"/>
    <property type="evidence" value="ECO:0007669"/>
    <property type="project" value="InterPro"/>
</dbReference>
<dbReference type="GO" id="GO:0006260">
    <property type="term" value="P:DNA replication"/>
    <property type="evidence" value="ECO:0007669"/>
    <property type="project" value="UniProtKB-KW"/>
</dbReference>
<dbReference type="CDD" id="cd04485">
    <property type="entry name" value="DnaE_OBF"/>
    <property type="match status" value="1"/>
</dbReference>
<dbReference type="CDD" id="cd07433">
    <property type="entry name" value="PHP_PolIIIA_DnaE1"/>
    <property type="match status" value="1"/>
</dbReference>
<dbReference type="FunFam" id="1.10.10.1600:FF:000001">
    <property type="entry name" value="DNA polymerase III subunit alpha"/>
    <property type="match status" value="1"/>
</dbReference>
<dbReference type="FunFam" id="1.10.150.870:FF:000001">
    <property type="entry name" value="DNA polymerase III subunit alpha"/>
    <property type="match status" value="1"/>
</dbReference>
<dbReference type="Gene3D" id="1.10.150.870">
    <property type="match status" value="1"/>
</dbReference>
<dbReference type="Gene3D" id="1.10.10.1600">
    <property type="entry name" value="Bacterial DNA polymerase III alpha subunit, thumb domain"/>
    <property type="match status" value="1"/>
</dbReference>
<dbReference type="Gene3D" id="3.20.20.140">
    <property type="entry name" value="Metal-dependent hydrolases"/>
    <property type="match status" value="1"/>
</dbReference>
<dbReference type="Gene3D" id="2.40.50.140">
    <property type="entry name" value="Nucleic acid-binding proteins"/>
    <property type="match status" value="1"/>
</dbReference>
<dbReference type="InterPro" id="IPR011708">
    <property type="entry name" value="DNA_pol3_alpha_NTPase_dom"/>
</dbReference>
<dbReference type="InterPro" id="IPR041931">
    <property type="entry name" value="DNA_pol3_alpha_thumb_dom"/>
</dbReference>
<dbReference type="InterPro" id="IPR040982">
    <property type="entry name" value="DNA_pol3_finger"/>
</dbReference>
<dbReference type="InterPro" id="IPR004805">
    <property type="entry name" value="DnaE2/DnaE/PolC"/>
</dbReference>
<dbReference type="InterPro" id="IPR029460">
    <property type="entry name" value="DNAPol_HHH"/>
</dbReference>
<dbReference type="InterPro" id="IPR012340">
    <property type="entry name" value="NA-bd_OB-fold"/>
</dbReference>
<dbReference type="InterPro" id="IPR004365">
    <property type="entry name" value="NA-bd_OB_tRNA"/>
</dbReference>
<dbReference type="InterPro" id="IPR004013">
    <property type="entry name" value="PHP_dom"/>
</dbReference>
<dbReference type="InterPro" id="IPR003141">
    <property type="entry name" value="Pol/His_phosphatase_N"/>
</dbReference>
<dbReference type="InterPro" id="IPR016195">
    <property type="entry name" value="Pol/histidinol_Pase-like"/>
</dbReference>
<dbReference type="InterPro" id="IPR049821">
    <property type="entry name" value="PolIIIA_DnaE1_PHP"/>
</dbReference>
<dbReference type="NCBIfam" id="TIGR00594">
    <property type="entry name" value="polc"/>
    <property type="match status" value="1"/>
</dbReference>
<dbReference type="NCBIfam" id="NF004226">
    <property type="entry name" value="PRK05673.1"/>
    <property type="match status" value="1"/>
</dbReference>
<dbReference type="PANTHER" id="PTHR32294">
    <property type="entry name" value="DNA POLYMERASE III SUBUNIT ALPHA"/>
    <property type="match status" value="1"/>
</dbReference>
<dbReference type="PANTHER" id="PTHR32294:SF0">
    <property type="entry name" value="DNA POLYMERASE III SUBUNIT ALPHA"/>
    <property type="match status" value="1"/>
</dbReference>
<dbReference type="Pfam" id="PF07733">
    <property type="entry name" value="DNA_pol3_alpha"/>
    <property type="match status" value="1"/>
</dbReference>
<dbReference type="Pfam" id="PF17657">
    <property type="entry name" value="DNA_pol3_finger"/>
    <property type="match status" value="1"/>
</dbReference>
<dbReference type="Pfam" id="PF14579">
    <property type="entry name" value="HHH_6"/>
    <property type="match status" value="1"/>
</dbReference>
<dbReference type="Pfam" id="PF02811">
    <property type="entry name" value="PHP"/>
    <property type="match status" value="1"/>
</dbReference>
<dbReference type="Pfam" id="PF01336">
    <property type="entry name" value="tRNA_anti-codon"/>
    <property type="match status" value="1"/>
</dbReference>
<dbReference type="SMART" id="SM00481">
    <property type="entry name" value="POLIIIAc"/>
    <property type="match status" value="1"/>
</dbReference>
<dbReference type="SUPFAM" id="SSF89550">
    <property type="entry name" value="PHP domain-like"/>
    <property type="match status" value="1"/>
</dbReference>